<name>PNP_METNO</name>
<proteinExistence type="inferred from homology"/>
<organism>
    <name type="scientific">Methylobacterium nodulans (strain LMG 21967 / CNCM I-2342 / ORS 2060)</name>
    <dbReference type="NCBI Taxonomy" id="460265"/>
    <lineage>
        <taxon>Bacteria</taxon>
        <taxon>Pseudomonadati</taxon>
        <taxon>Pseudomonadota</taxon>
        <taxon>Alphaproteobacteria</taxon>
        <taxon>Hyphomicrobiales</taxon>
        <taxon>Methylobacteriaceae</taxon>
        <taxon>Methylobacterium</taxon>
    </lineage>
</organism>
<gene>
    <name evidence="1" type="primary">pnp</name>
    <name type="ordered locus">Mnod_2897</name>
</gene>
<keyword id="KW-0963">Cytoplasm</keyword>
<keyword id="KW-0460">Magnesium</keyword>
<keyword id="KW-0479">Metal-binding</keyword>
<keyword id="KW-0548">Nucleotidyltransferase</keyword>
<keyword id="KW-1185">Reference proteome</keyword>
<keyword id="KW-0694">RNA-binding</keyword>
<keyword id="KW-0808">Transferase</keyword>
<accession>B8IGX3</accession>
<sequence length="725" mass="78902">MFDVQREELLWGGRKLVLETGKVARQADGAVVASYGETTVLATVVSLKEPKPGIDFLPLTVNYQERAYAAGRIPGGYFKREGRPSEKETLVSRLIDRPIRPLFVEGWRNDTQVVVTVLSHDLENDPDIVSMVAASAALTLSGVPFMGPIGAARVGYVGNQYKLNPTIQEMEGSSLDLVVAGTEAAVLMVESEAKELPEDVMLGAVMFGHKHFQPVIEAIIRLAEKAAKEPRDFQPTDLSEVEKAVLEIGEADLREAYKKTVKQERYAAVDAVKAKVMAALAPEEGEAKFEPETVKAAFKEVQAKVVRWNILDTGSRIDGRDVRTVRPILSEVGVLPRAHGSALFTRGETQALVVATLGTGDDEQFIDALEGTYKETFLLHYNFPPYSVGETGRMGSPGRREIGHGKLAWRAVHPLLPAAHEFPYTIRVVSEITESNGSSSMATVCGSSLALMDAGVPLRRPVAGIAMGLILEGERFAVLSDILGDEDHLGDMDFKVAGTSEGVTSLQMDIKIAGITEEIMRVALDQAKDGRAHILGEMAKALTAARPELGEHAPRIETMQIPTDKIREVIGTGGKVIREIVEKTGAKIDIQDTGVIKIASSDAKAIKAAYNWIRSIVAEPEAGMIYDGTVVKTMEFGAFINFFGAKDGLVHISELAPQRVAKVTDVVKEGDKVKVKFLGQDERGKIRLSMKVVDQQTGEDITEKLKAEREADRNRERQARQSAGE</sequence>
<dbReference type="EC" id="2.7.7.8" evidence="1"/>
<dbReference type="EMBL" id="CP001349">
    <property type="protein sequence ID" value="ACL57848.1"/>
    <property type="molecule type" value="Genomic_DNA"/>
</dbReference>
<dbReference type="RefSeq" id="WP_015929523.1">
    <property type="nucleotide sequence ID" value="NC_011894.1"/>
</dbReference>
<dbReference type="SMR" id="B8IGX3"/>
<dbReference type="STRING" id="460265.Mnod_2897"/>
<dbReference type="KEGG" id="mno:Mnod_2897"/>
<dbReference type="eggNOG" id="COG1185">
    <property type="taxonomic scope" value="Bacteria"/>
</dbReference>
<dbReference type="HOGENOM" id="CLU_004217_2_2_5"/>
<dbReference type="OrthoDB" id="9804305at2"/>
<dbReference type="Proteomes" id="UP000008207">
    <property type="component" value="Chromosome"/>
</dbReference>
<dbReference type="GO" id="GO:0005829">
    <property type="term" value="C:cytosol"/>
    <property type="evidence" value="ECO:0007669"/>
    <property type="project" value="TreeGrafter"/>
</dbReference>
<dbReference type="GO" id="GO:0000175">
    <property type="term" value="F:3'-5'-RNA exonuclease activity"/>
    <property type="evidence" value="ECO:0007669"/>
    <property type="project" value="TreeGrafter"/>
</dbReference>
<dbReference type="GO" id="GO:0000287">
    <property type="term" value="F:magnesium ion binding"/>
    <property type="evidence" value="ECO:0007669"/>
    <property type="project" value="UniProtKB-UniRule"/>
</dbReference>
<dbReference type="GO" id="GO:0004654">
    <property type="term" value="F:polyribonucleotide nucleotidyltransferase activity"/>
    <property type="evidence" value="ECO:0007669"/>
    <property type="project" value="UniProtKB-UniRule"/>
</dbReference>
<dbReference type="GO" id="GO:0003723">
    <property type="term" value="F:RNA binding"/>
    <property type="evidence" value="ECO:0007669"/>
    <property type="project" value="UniProtKB-UniRule"/>
</dbReference>
<dbReference type="GO" id="GO:0006402">
    <property type="term" value="P:mRNA catabolic process"/>
    <property type="evidence" value="ECO:0007669"/>
    <property type="project" value="UniProtKB-UniRule"/>
</dbReference>
<dbReference type="GO" id="GO:0006396">
    <property type="term" value="P:RNA processing"/>
    <property type="evidence" value="ECO:0007669"/>
    <property type="project" value="InterPro"/>
</dbReference>
<dbReference type="CDD" id="cd02393">
    <property type="entry name" value="KH-I_PNPase"/>
    <property type="match status" value="1"/>
</dbReference>
<dbReference type="CDD" id="cd11363">
    <property type="entry name" value="RNase_PH_PNPase_1"/>
    <property type="match status" value="1"/>
</dbReference>
<dbReference type="CDD" id="cd11364">
    <property type="entry name" value="RNase_PH_PNPase_2"/>
    <property type="match status" value="1"/>
</dbReference>
<dbReference type="CDD" id="cd04472">
    <property type="entry name" value="S1_PNPase"/>
    <property type="match status" value="1"/>
</dbReference>
<dbReference type="FunFam" id="2.40.50.140:FF:000107">
    <property type="entry name" value="Polyribonucleotide nucleotidyltransferase"/>
    <property type="match status" value="1"/>
</dbReference>
<dbReference type="FunFam" id="3.30.1370.10:FF:000001">
    <property type="entry name" value="Polyribonucleotide nucleotidyltransferase"/>
    <property type="match status" value="1"/>
</dbReference>
<dbReference type="FunFam" id="3.30.230.70:FF:000001">
    <property type="entry name" value="Polyribonucleotide nucleotidyltransferase"/>
    <property type="match status" value="1"/>
</dbReference>
<dbReference type="FunFam" id="3.30.230.70:FF:000002">
    <property type="entry name" value="Polyribonucleotide nucleotidyltransferase"/>
    <property type="match status" value="1"/>
</dbReference>
<dbReference type="Gene3D" id="3.30.230.70">
    <property type="entry name" value="GHMP Kinase, N-terminal domain"/>
    <property type="match status" value="2"/>
</dbReference>
<dbReference type="Gene3D" id="3.30.1370.10">
    <property type="entry name" value="K Homology domain, type 1"/>
    <property type="match status" value="1"/>
</dbReference>
<dbReference type="Gene3D" id="2.40.50.140">
    <property type="entry name" value="Nucleic acid-binding proteins"/>
    <property type="match status" value="1"/>
</dbReference>
<dbReference type="HAMAP" id="MF_01595">
    <property type="entry name" value="PNPase"/>
    <property type="match status" value="1"/>
</dbReference>
<dbReference type="InterPro" id="IPR001247">
    <property type="entry name" value="ExoRNase_PH_dom1"/>
</dbReference>
<dbReference type="InterPro" id="IPR015847">
    <property type="entry name" value="ExoRNase_PH_dom2"/>
</dbReference>
<dbReference type="InterPro" id="IPR036345">
    <property type="entry name" value="ExoRNase_PH_dom2_sf"/>
</dbReference>
<dbReference type="InterPro" id="IPR004087">
    <property type="entry name" value="KH_dom"/>
</dbReference>
<dbReference type="InterPro" id="IPR004088">
    <property type="entry name" value="KH_dom_type_1"/>
</dbReference>
<dbReference type="InterPro" id="IPR036612">
    <property type="entry name" value="KH_dom_type_1_sf"/>
</dbReference>
<dbReference type="InterPro" id="IPR012340">
    <property type="entry name" value="NA-bd_OB-fold"/>
</dbReference>
<dbReference type="InterPro" id="IPR012162">
    <property type="entry name" value="PNPase"/>
</dbReference>
<dbReference type="InterPro" id="IPR027408">
    <property type="entry name" value="PNPase/RNase_PH_dom_sf"/>
</dbReference>
<dbReference type="InterPro" id="IPR015848">
    <property type="entry name" value="PNPase_PH_RNA-bd_bac/org-type"/>
</dbReference>
<dbReference type="InterPro" id="IPR020568">
    <property type="entry name" value="Ribosomal_Su5_D2-typ_SF"/>
</dbReference>
<dbReference type="InterPro" id="IPR003029">
    <property type="entry name" value="S1_domain"/>
</dbReference>
<dbReference type="NCBIfam" id="TIGR03591">
    <property type="entry name" value="polynuc_phos"/>
    <property type="match status" value="1"/>
</dbReference>
<dbReference type="NCBIfam" id="NF008805">
    <property type="entry name" value="PRK11824.1"/>
    <property type="match status" value="1"/>
</dbReference>
<dbReference type="PANTHER" id="PTHR11252">
    <property type="entry name" value="POLYRIBONUCLEOTIDE NUCLEOTIDYLTRANSFERASE"/>
    <property type="match status" value="1"/>
</dbReference>
<dbReference type="PANTHER" id="PTHR11252:SF0">
    <property type="entry name" value="POLYRIBONUCLEOTIDE NUCLEOTIDYLTRANSFERASE 1, MITOCHONDRIAL"/>
    <property type="match status" value="1"/>
</dbReference>
<dbReference type="Pfam" id="PF00013">
    <property type="entry name" value="KH_1"/>
    <property type="match status" value="1"/>
</dbReference>
<dbReference type="Pfam" id="PF03726">
    <property type="entry name" value="PNPase"/>
    <property type="match status" value="1"/>
</dbReference>
<dbReference type="Pfam" id="PF01138">
    <property type="entry name" value="RNase_PH"/>
    <property type="match status" value="2"/>
</dbReference>
<dbReference type="Pfam" id="PF03725">
    <property type="entry name" value="RNase_PH_C"/>
    <property type="match status" value="2"/>
</dbReference>
<dbReference type="Pfam" id="PF00575">
    <property type="entry name" value="S1"/>
    <property type="match status" value="1"/>
</dbReference>
<dbReference type="PIRSF" id="PIRSF005499">
    <property type="entry name" value="PNPase"/>
    <property type="match status" value="1"/>
</dbReference>
<dbReference type="SMART" id="SM00322">
    <property type="entry name" value="KH"/>
    <property type="match status" value="1"/>
</dbReference>
<dbReference type="SMART" id="SM00316">
    <property type="entry name" value="S1"/>
    <property type="match status" value="1"/>
</dbReference>
<dbReference type="SUPFAM" id="SSF54791">
    <property type="entry name" value="Eukaryotic type KH-domain (KH-domain type I)"/>
    <property type="match status" value="1"/>
</dbReference>
<dbReference type="SUPFAM" id="SSF50249">
    <property type="entry name" value="Nucleic acid-binding proteins"/>
    <property type="match status" value="1"/>
</dbReference>
<dbReference type="SUPFAM" id="SSF55666">
    <property type="entry name" value="Ribonuclease PH domain 2-like"/>
    <property type="match status" value="2"/>
</dbReference>
<dbReference type="SUPFAM" id="SSF54211">
    <property type="entry name" value="Ribosomal protein S5 domain 2-like"/>
    <property type="match status" value="2"/>
</dbReference>
<dbReference type="PROSITE" id="PS50084">
    <property type="entry name" value="KH_TYPE_1"/>
    <property type="match status" value="1"/>
</dbReference>
<dbReference type="PROSITE" id="PS50126">
    <property type="entry name" value="S1"/>
    <property type="match status" value="1"/>
</dbReference>
<reference key="1">
    <citation type="submission" date="2009-01" db="EMBL/GenBank/DDBJ databases">
        <title>Complete sequence of chromosome of Methylobacterium nodulans ORS 2060.</title>
        <authorList>
            <consortium name="US DOE Joint Genome Institute"/>
            <person name="Lucas S."/>
            <person name="Copeland A."/>
            <person name="Lapidus A."/>
            <person name="Glavina del Rio T."/>
            <person name="Dalin E."/>
            <person name="Tice H."/>
            <person name="Bruce D."/>
            <person name="Goodwin L."/>
            <person name="Pitluck S."/>
            <person name="Sims D."/>
            <person name="Brettin T."/>
            <person name="Detter J.C."/>
            <person name="Han C."/>
            <person name="Larimer F."/>
            <person name="Land M."/>
            <person name="Hauser L."/>
            <person name="Kyrpides N."/>
            <person name="Ivanova N."/>
            <person name="Marx C.J."/>
            <person name="Richardson P."/>
        </authorList>
    </citation>
    <scope>NUCLEOTIDE SEQUENCE [LARGE SCALE GENOMIC DNA]</scope>
    <source>
        <strain>LMG 21967 / CNCM I-2342 / ORS 2060</strain>
    </source>
</reference>
<feature type="chain" id="PRO_1000185744" description="Polyribonucleotide nucleotidyltransferase">
    <location>
        <begin position="1"/>
        <end position="725"/>
    </location>
</feature>
<feature type="domain" description="KH" evidence="1">
    <location>
        <begin position="554"/>
        <end position="613"/>
    </location>
</feature>
<feature type="domain" description="S1 motif" evidence="1">
    <location>
        <begin position="623"/>
        <end position="691"/>
    </location>
</feature>
<feature type="region of interest" description="Disordered" evidence="2">
    <location>
        <begin position="697"/>
        <end position="725"/>
    </location>
</feature>
<feature type="compositionally biased region" description="Basic and acidic residues" evidence="2">
    <location>
        <begin position="701"/>
        <end position="719"/>
    </location>
</feature>
<feature type="binding site" evidence="1">
    <location>
        <position position="487"/>
    </location>
    <ligand>
        <name>Mg(2+)</name>
        <dbReference type="ChEBI" id="CHEBI:18420"/>
    </ligand>
</feature>
<feature type="binding site" evidence="1">
    <location>
        <position position="493"/>
    </location>
    <ligand>
        <name>Mg(2+)</name>
        <dbReference type="ChEBI" id="CHEBI:18420"/>
    </ligand>
</feature>
<protein>
    <recommendedName>
        <fullName evidence="1">Polyribonucleotide nucleotidyltransferase</fullName>
        <ecNumber evidence="1">2.7.7.8</ecNumber>
    </recommendedName>
    <alternativeName>
        <fullName evidence="1">Polynucleotide phosphorylase</fullName>
        <shortName evidence="1">PNPase</shortName>
    </alternativeName>
</protein>
<evidence type="ECO:0000255" key="1">
    <source>
        <dbReference type="HAMAP-Rule" id="MF_01595"/>
    </source>
</evidence>
<evidence type="ECO:0000256" key="2">
    <source>
        <dbReference type="SAM" id="MobiDB-lite"/>
    </source>
</evidence>
<comment type="function">
    <text evidence="1">Involved in mRNA degradation. Catalyzes the phosphorolysis of single-stranded polyribonucleotides processively in the 3'- to 5'-direction.</text>
</comment>
<comment type="catalytic activity">
    <reaction evidence="1">
        <text>RNA(n+1) + phosphate = RNA(n) + a ribonucleoside 5'-diphosphate</text>
        <dbReference type="Rhea" id="RHEA:22096"/>
        <dbReference type="Rhea" id="RHEA-COMP:14527"/>
        <dbReference type="Rhea" id="RHEA-COMP:17342"/>
        <dbReference type="ChEBI" id="CHEBI:43474"/>
        <dbReference type="ChEBI" id="CHEBI:57930"/>
        <dbReference type="ChEBI" id="CHEBI:140395"/>
        <dbReference type="EC" id="2.7.7.8"/>
    </reaction>
</comment>
<comment type="cofactor">
    <cofactor evidence="1">
        <name>Mg(2+)</name>
        <dbReference type="ChEBI" id="CHEBI:18420"/>
    </cofactor>
</comment>
<comment type="subcellular location">
    <subcellularLocation>
        <location evidence="1">Cytoplasm</location>
    </subcellularLocation>
</comment>
<comment type="similarity">
    <text evidence="1">Belongs to the polyribonucleotide nucleotidyltransferase family.</text>
</comment>